<gene>
    <name evidence="2" type="primary">ddl</name>
    <name type="synonym">ddlB</name>
    <name type="ordered locus">RSc2842</name>
    <name type="ORF">RS00263</name>
</gene>
<keyword id="KW-0067">ATP-binding</keyword>
<keyword id="KW-0133">Cell shape</keyword>
<keyword id="KW-0961">Cell wall biogenesis/degradation</keyword>
<keyword id="KW-0963">Cytoplasm</keyword>
<keyword id="KW-0436">Ligase</keyword>
<keyword id="KW-0460">Magnesium</keyword>
<keyword id="KW-0464">Manganese</keyword>
<keyword id="KW-0479">Metal-binding</keyword>
<keyword id="KW-0547">Nucleotide-binding</keyword>
<keyword id="KW-0573">Peptidoglycan synthesis</keyword>
<keyword id="KW-1185">Reference proteome</keyword>
<evidence type="ECO:0000250" key="1"/>
<evidence type="ECO:0000255" key="2">
    <source>
        <dbReference type="HAMAP-Rule" id="MF_00047"/>
    </source>
</evidence>
<protein>
    <recommendedName>
        <fullName evidence="2">D-alanine--D-alanine ligase</fullName>
        <ecNumber evidence="2">6.3.2.4</ecNumber>
    </recommendedName>
    <alternativeName>
        <fullName evidence="2">D-Ala-D-Ala ligase</fullName>
    </alternativeName>
    <alternativeName>
        <fullName evidence="2">D-alanylalanine synthetase</fullName>
    </alternativeName>
</protein>
<accession>Q8XVI9</accession>
<name>DDL_RALN1</name>
<comment type="function">
    <text evidence="2">Cell wall formation.</text>
</comment>
<comment type="catalytic activity">
    <reaction evidence="2">
        <text>2 D-alanine + ATP = D-alanyl-D-alanine + ADP + phosphate + H(+)</text>
        <dbReference type="Rhea" id="RHEA:11224"/>
        <dbReference type="ChEBI" id="CHEBI:15378"/>
        <dbReference type="ChEBI" id="CHEBI:30616"/>
        <dbReference type="ChEBI" id="CHEBI:43474"/>
        <dbReference type="ChEBI" id="CHEBI:57416"/>
        <dbReference type="ChEBI" id="CHEBI:57822"/>
        <dbReference type="ChEBI" id="CHEBI:456216"/>
        <dbReference type="EC" id="6.3.2.4"/>
    </reaction>
</comment>
<comment type="cofactor">
    <cofactor evidence="1">
        <name>Mg(2+)</name>
        <dbReference type="ChEBI" id="CHEBI:18420"/>
    </cofactor>
    <cofactor evidence="1">
        <name>Mn(2+)</name>
        <dbReference type="ChEBI" id="CHEBI:29035"/>
    </cofactor>
    <text evidence="1">Binds 2 magnesium or manganese ions per subunit.</text>
</comment>
<comment type="pathway">
    <text evidence="2">Cell wall biogenesis; peptidoglycan biosynthesis.</text>
</comment>
<comment type="subcellular location">
    <subcellularLocation>
        <location evidence="2">Cytoplasm</location>
    </subcellularLocation>
</comment>
<comment type="similarity">
    <text evidence="2">Belongs to the D-alanine--D-alanine ligase family.</text>
</comment>
<feature type="chain" id="PRO_0000177861" description="D-alanine--D-alanine ligase">
    <location>
        <begin position="1"/>
        <end position="331"/>
    </location>
</feature>
<feature type="domain" description="ATP-grasp" evidence="2">
    <location>
        <begin position="116"/>
        <end position="316"/>
    </location>
</feature>
<feature type="binding site" evidence="2">
    <location>
        <begin position="142"/>
        <end position="197"/>
    </location>
    <ligand>
        <name>ATP</name>
        <dbReference type="ChEBI" id="CHEBI:30616"/>
    </ligand>
</feature>
<feature type="binding site" evidence="2">
    <location>
        <position position="269"/>
    </location>
    <ligand>
        <name>Mg(2+)</name>
        <dbReference type="ChEBI" id="CHEBI:18420"/>
        <label>1</label>
    </ligand>
</feature>
<feature type="binding site" evidence="2">
    <location>
        <position position="283"/>
    </location>
    <ligand>
        <name>Mg(2+)</name>
        <dbReference type="ChEBI" id="CHEBI:18420"/>
        <label>1</label>
    </ligand>
</feature>
<feature type="binding site" evidence="2">
    <location>
        <position position="283"/>
    </location>
    <ligand>
        <name>Mg(2+)</name>
        <dbReference type="ChEBI" id="CHEBI:18420"/>
        <label>2</label>
    </ligand>
</feature>
<feature type="binding site" evidence="2">
    <location>
        <position position="285"/>
    </location>
    <ligand>
        <name>Mg(2+)</name>
        <dbReference type="ChEBI" id="CHEBI:18420"/>
        <label>2</label>
    </ligand>
</feature>
<dbReference type="EC" id="6.3.2.4" evidence="2"/>
<dbReference type="EMBL" id="AL646052">
    <property type="protein sequence ID" value="CAD16549.1"/>
    <property type="molecule type" value="Genomic_DNA"/>
</dbReference>
<dbReference type="RefSeq" id="WP_011002748.1">
    <property type="nucleotide sequence ID" value="NC_003295.1"/>
</dbReference>
<dbReference type="SMR" id="Q8XVI9"/>
<dbReference type="STRING" id="267608.RSc2842"/>
<dbReference type="EnsemblBacteria" id="CAD16549">
    <property type="protein sequence ID" value="CAD16549"/>
    <property type="gene ID" value="RSc2842"/>
</dbReference>
<dbReference type="KEGG" id="rso:RSc2842"/>
<dbReference type="eggNOG" id="COG1181">
    <property type="taxonomic scope" value="Bacteria"/>
</dbReference>
<dbReference type="HOGENOM" id="CLU_039268_1_2_4"/>
<dbReference type="UniPathway" id="UPA00219"/>
<dbReference type="Proteomes" id="UP000001436">
    <property type="component" value="Chromosome"/>
</dbReference>
<dbReference type="GO" id="GO:0005829">
    <property type="term" value="C:cytosol"/>
    <property type="evidence" value="ECO:0007669"/>
    <property type="project" value="TreeGrafter"/>
</dbReference>
<dbReference type="GO" id="GO:0005524">
    <property type="term" value="F:ATP binding"/>
    <property type="evidence" value="ECO:0007669"/>
    <property type="project" value="UniProtKB-KW"/>
</dbReference>
<dbReference type="GO" id="GO:0008716">
    <property type="term" value="F:D-alanine-D-alanine ligase activity"/>
    <property type="evidence" value="ECO:0007669"/>
    <property type="project" value="UniProtKB-UniRule"/>
</dbReference>
<dbReference type="GO" id="GO:0046872">
    <property type="term" value="F:metal ion binding"/>
    <property type="evidence" value="ECO:0007669"/>
    <property type="project" value="UniProtKB-KW"/>
</dbReference>
<dbReference type="GO" id="GO:0071555">
    <property type="term" value="P:cell wall organization"/>
    <property type="evidence" value="ECO:0007669"/>
    <property type="project" value="UniProtKB-KW"/>
</dbReference>
<dbReference type="GO" id="GO:0009252">
    <property type="term" value="P:peptidoglycan biosynthetic process"/>
    <property type="evidence" value="ECO:0007669"/>
    <property type="project" value="UniProtKB-UniRule"/>
</dbReference>
<dbReference type="GO" id="GO:0008360">
    <property type="term" value="P:regulation of cell shape"/>
    <property type="evidence" value="ECO:0007669"/>
    <property type="project" value="UniProtKB-KW"/>
</dbReference>
<dbReference type="FunFam" id="3.40.50.20:FF:000013">
    <property type="entry name" value="D-alanine--D-alanine ligase"/>
    <property type="match status" value="1"/>
</dbReference>
<dbReference type="Gene3D" id="3.40.50.20">
    <property type="match status" value="1"/>
</dbReference>
<dbReference type="Gene3D" id="3.30.1490.20">
    <property type="entry name" value="ATP-grasp fold, A domain"/>
    <property type="match status" value="1"/>
</dbReference>
<dbReference type="Gene3D" id="3.30.470.20">
    <property type="entry name" value="ATP-grasp fold, B domain"/>
    <property type="match status" value="1"/>
</dbReference>
<dbReference type="HAMAP" id="MF_00047">
    <property type="entry name" value="Dala_Dala_lig"/>
    <property type="match status" value="1"/>
</dbReference>
<dbReference type="InterPro" id="IPR011761">
    <property type="entry name" value="ATP-grasp"/>
</dbReference>
<dbReference type="InterPro" id="IPR013815">
    <property type="entry name" value="ATP_grasp_subdomain_1"/>
</dbReference>
<dbReference type="InterPro" id="IPR000291">
    <property type="entry name" value="D-Ala_lig_Van_CS"/>
</dbReference>
<dbReference type="InterPro" id="IPR005905">
    <property type="entry name" value="D_ala_D_ala"/>
</dbReference>
<dbReference type="InterPro" id="IPR011095">
    <property type="entry name" value="Dala_Dala_lig_C"/>
</dbReference>
<dbReference type="InterPro" id="IPR011127">
    <property type="entry name" value="Dala_Dala_lig_N"/>
</dbReference>
<dbReference type="InterPro" id="IPR016185">
    <property type="entry name" value="PreATP-grasp_dom_sf"/>
</dbReference>
<dbReference type="NCBIfam" id="TIGR01205">
    <property type="entry name" value="D_ala_D_alaTIGR"/>
    <property type="match status" value="1"/>
</dbReference>
<dbReference type="NCBIfam" id="NF002378">
    <property type="entry name" value="PRK01372.1"/>
    <property type="match status" value="1"/>
</dbReference>
<dbReference type="PANTHER" id="PTHR23132">
    <property type="entry name" value="D-ALANINE--D-ALANINE LIGASE"/>
    <property type="match status" value="1"/>
</dbReference>
<dbReference type="PANTHER" id="PTHR23132:SF23">
    <property type="entry name" value="D-ALANINE--D-ALANINE LIGASE B"/>
    <property type="match status" value="1"/>
</dbReference>
<dbReference type="Pfam" id="PF07478">
    <property type="entry name" value="Dala_Dala_lig_C"/>
    <property type="match status" value="1"/>
</dbReference>
<dbReference type="Pfam" id="PF01820">
    <property type="entry name" value="Dala_Dala_lig_N"/>
    <property type="match status" value="1"/>
</dbReference>
<dbReference type="PIRSF" id="PIRSF039102">
    <property type="entry name" value="Ddl/VanB"/>
    <property type="match status" value="1"/>
</dbReference>
<dbReference type="SUPFAM" id="SSF56059">
    <property type="entry name" value="Glutathione synthetase ATP-binding domain-like"/>
    <property type="match status" value="1"/>
</dbReference>
<dbReference type="SUPFAM" id="SSF52440">
    <property type="entry name" value="PreATP-grasp domain"/>
    <property type="match status" value="1"/>
</dbReference>
<dbReference type="PROSITE" id="PS50975">
    <property type="entry name" value="ATP_GRASP"/>
    <property type="match status" value="1"/>
</dbReference>
<dbReference type="PROSITE" id="PS00843">
    <property type="entry name" value="DALA_DALA_LIGASE_1"/>
    <property type="match status" value="1"/>
</dbReference>
<dbReference type="PROSITE" id="PS00844">
    <property type="entry name" value="DALA_DALA_LIGASE_2"/>
    <property type="match status" value="1"/>
</dbReference>
<sequence>MTTGPFVPHPTLDPKSLGKVGVILGGRSAEREISLLSGNGVLAALRSRGVDAHPFDPGTQPVAGLAAQGFHRVVISLHGRFGEDGTIQGLLEQFGIPYTGSGVLASALAMDKEATKRLWQTHSLPTPDFVMLHAGADWQAVADRLGLPLIVKPAREGSSIGLTKVTSVAELPAAYEKAARLDRDVMAEQFIDGDELTCAVIGEGEHATALPLIRIVAPQANYDYQHKYFTDDTRYECPAPIPAEAAARVQALVVQAYRSLGCRGWGRADIMLRKHDGAPFLLEMNTSPGMTGHSLVPMAARAVGISYEDFVLQLAATASLELRASHDWKPE</sequence>
<reference key="1">
    <citation type="journal article" date="2002" name="Nature">
        <title>Genome sequence of the plant pathogen Ralstonia solanacearum.</title>
        <authorList>
            <person name="Salanoubat M."/>
            <person name="Genin S."/>
            <person name="Artiguenave F."/>
            <person name="Gouzy J."/>
            <person name="Mangenot S."/>
            <person name="Arlat M."/>
            <person name="Billault A."/>
            <person name="Brottier P."/>
            <person name="Camus J.-C."/>
            <person name="Cattolico L."/>
            <person name="Chandler M."/>
            <person name="Choisne N."/>
            <person name="Claudel-Renard C."/>
            <person name="Cunnac S."/>
            <person name="Demange N."/>
            <person name="Gaspin C."/>
            <person name="Lavie M."/>
            <person name="Moisan A."/>
            <person name="Robert C."/>
            <person name="Saurin W."/>
            <person name="Schiex T."/>
            <person name="Siguier P."/>
            <person name="Thebault P."/>
            <person name="Whalen M."/>
            <person name="Wincker P."/>
            <person name="Levy M."/>
            <person name="Weissenbach J."/>
            <person name="Boucher C.A."/>
        </authorList>
    </citation>
    <scope>NUCLEOTIDE SEQUENCE [LARGE SCALE GENOMIC DNA]</scope>
    <source>
        <strain>ATCC BAA-1114 / GMI1000</strain>
    </source>
</reference>
<organism>
    <name type="scientific">Ralstonia nicotianae (strain ATCC BAA-1114 / GMI1000)</name>
    <name type="common">Ralstonia solanacearum</name>
    <dbReference type="NCBI Taxonomy" id="267608"/>
    <lineage>
        <taxon>Bacteria</taxon>
        <taxon>Pseudomonadati</taxon>
        <taxon>Pseudomonadota</taxon>
        <taxon>Betaproteobacteria</taxon>
        <taxon>Burkholderiales</taxon>
        <taxon>Burkholderiaceae</taxon>
        <taxon>Ralstonia</taxon>
        <taxon>Ralstonia solanacearum species complex</taxon>
    </lineage>
</organism>
<proteinExistence type="inferred from homology"/>